<proteinExistence type="inferred from homology"/>
<protein>
    <recommendedName>
        <fullName>Major viral transcription factor ICP4 homolog</fullName>
    </recommendedName>
</protein>
<keyword id="KW-0238">DNA-binding</keyword>
<keyword id="KW-0244">Early protein</keyword>
<keyword id="KW-1048">Host nucleus</keyword>
<keyword id="KW-0597">Phosphoprotein</keyword>
<keyword id="KW-0804">Transcription</keyword>
<keyword id="KW-0805">Transcription regulation</keyword>
<accession>P11675</accession>
<sequence>MADDLFDFIETEGNFSQLLAAAAAAAEEEGIASGPDGGSQGSRRRGSSGEDLLFGPGGLFSDDAAEAEAAVLAAAAGATRPPRPPSAQQQRHARRGSGEIVVLDDEDEEEDEPGSPAAGSPGRALHQGSEHGHLVLGPRSRAGSGPRPPTPAALAAAEAGAPGGPGRSSPSAASPASSSSGSSGSSGSPGPSAAPRRWSPARGDPVGEPGPAARPRTPAPPAQPAAVAAAPARRGPASPASPAAGPVSAPGGGGAPSGGGDRGRHHHQHREPLLDEPAAARRLDPRPLGARSPVSSNPNSSSSSTTTVAVEPVARGPEKDEDGLGLAGDGGAPLQRQPRRRRAGEGALRRGRGFSSSSSGGSDSDLSPARSPSAPRAPAAAAAAARRSASSSSSSSSSSSSSSSSEGEEDEGVRPGAPLARAGPPPSPPAPAAAPRPSASSASATSSSAAASPAPAPEPARPPRRKRRSTNNHLSLMADGPPPTDGPLLTPLGEPWPGSDPPADGRVRYGGAGDSREGLWDEDDVRQAAARYRAAAGPVPVFIPEMGDSRKQHEALVRLIYSGAAGEAMSWLQNPRMQAPDQRFNQFCQRRVHAPHGHGSFITGSVTPPLPHIGDAMAAQDPLWALPHAVSAVAMSRRYDRTQKTFILQSLRRAYADMAYPGRAADPRAGEATVEALCARVRAAFAAAQPGRVPRELADACVLACRGVLERLLPCPLRLPAPARAPAALGPACLEEVTAALLALRDAIPGAGPAERQQAADSVALVARTVAPLVRYSVDGARAREAAWTYAAALFAPANVAGARLAEAAARPGPAEPAPGLPPLWPEQPGLVVPAPAPAAAGAPSGLPGSGPSSPASTKSGSSTKSSSGTKSGLSGSSGYASSPAAGPDPAPERRKKKRRAPGARRPGDGEEDEGLSGSALRGDGHGHRDDEEDRGPRRKRRSLGLGPAPDPAPALVSSSSSSSSSEDDRLRRPLGPMPEHPAPDGGFRRVPAGETHTPRPSAAALAAYCPPEVARALVDQEVFPELWRPALTFDPAALAHIAARRGAAGAPLRRRAAWMRQIADPEDVRVVVLYDPLPHEELCAEPAEGAPRPAWDPRRGGLSALLAAFAHRLCTPDSHAWAGNWTGRPDIGRLNAQGVLLLSARDLGFAGAVEYLCSRLGAARRRLIVLDTIEDWPADGPAVGDYHVYVRARLDPAAQCAVRWPECRELRAAVLDSSSIVGPACFARVEASFARLHPGAEPLRLCRQDNVRYTVSTRAGPRTPVPLPPRAYRERVLPTVDGCKDMARQRSALGLGDPDFDAGAAFGHRAANRWGLGAPLRPVFVSCGRRGLAELRGPEGLPAELRAFCAAALLEPDAEAAPLVLAPGALAAAGAPPAVRWDFAPFETSVRAAAGGAVETHRPSGARGPGEDGEDSAAVEIVGFRGGDGRPRGPLGPIKVEAISDDEEAEDAGNPYLLLR</sequence>
<dbReference type="EMBL" id="X15120">
    <property type="protein sequence ID" value="CAA33214.1"/>
    <property type="molecule type" value="Genomic_DNA"/>
</dbReference>
<dbReference type="PIR" id="S04713">
    <property type="entry name" value="EDBEIF"/>
</dbReference>
<dbReference type="SMR" id="P11675"/>
<dbReference type="GO" id="GO:0042025">
    <property type="term" value="C:host cell nucleus"/>
    <property type="evidence" value="ECO:0007669"/>
    <property type="project" value="UniProtKB-SubCell"/>
</dbReference>
<dbReference type="GO" id="GO:0003677">
    <property type="term" value="F:DNA binding"/>
    <property type="evidence" value="ECO:0007669"/>
    <property type="project" value="UniProtKB-KW"/>
</dbReference>
<dbReference type="GO" id="GO:0039695">
    <property type="term" value="P:DNA-templated viral transcription"/>
    <property type="evidence" value="ECO:0000250"/>
    <property type="project" value="UniProtKB"/>
</dbReference>
<dbReference type="GO" id="GO:0045893">
    <property type="term" value="P:positive regulation of DNA-templated transcription"/>
    <property type="evidence" value="ECO:0007669"/>
    <property type="project" value="InterPro"/>
</dbReference>
<dbReference type="InterPro" id="IPR005205">
    <property type="entry name" value="Herpes_ICP4_C"/>
</dbReference>
<dbReference type="InterPro" id="IPR005206">
    <property type="entry name" value="Herpes_ICP4_N"/>
</dbReference>
<dbReference type="Pfam" id="PF03585">
    <property type="entry name" value="Herpes_ICP4_C"/>
    <property type="match status" value="2"/>
</dbReference>
<dbReference type="Pfam" id="PF03584">
    <property type="entry name" value="Herpes_ICP4_N"/>
    <property type="match status" value="1"/>
</dbReference>
<organismHost>
    <name type="scientific">Sus scrofa</name>
    <name type="common">Pig</name>
    <dbReference type="NCBI Taxonomy" id="9823"/>
</organismHost>
<evidence type="ECO:0000256" key="1">
    <source>
        <dbReference type="SAM" id="MobiDB-lite"/>
    </source>
</evidence>
<evidence type="ECO:0000305" key="2"/>
<organism>
    <name type="scientific">Suid herpesvirus 1 (strain Indiana-Funkhauser / Becker)</name>
    <name type="common">SuHV-1</name>
    <name type="synonym">Pseudorabies virus (strain Indiana-Funkhauser / Becker)</name>
    <dbReference type="NCBI Taxonomy" id="31523"/>
    <lineage>
        <taxon>Viruses</taxon>
        <taxon>Duplodnaviria</taxon>
        <taxon>Heunggongvirae</taxon>
        <taxon>Peploviricota</taxon>
        <taxon>Herviviricetes</taxon>
        <taxon>Herpesvirales</taxon>
        <taxon>Orthoherpesviridae</taxon>
        <taxon>Alphaherpesvirinae</taxon>
        <taxon>Varicellovirus</taxon>
        <taxon>Varicellovirus suidalpha1</taxon>
        <taxon>Suid herpesvirus 1</taxon>
    </lineage>
</organism>
<comment type="function">
    <text>This IE protein is a multifunctional protein capable of migrating to the nucleus, binding to DNA, trans-activating other viral genes, and autoregulating its own synthesis.</text>
</comment>
<comment type="subcellular location">
    <subcellularLocation>
        <location>Host nucleus</location>
    </subcellularLocation>
</comment>
<comment type="PTM">
    <text>A long stretch of serine residues may be a major site of phosphorylation.</text>
</comment>
<comment type="similarity">
    <text evidence="2">Belongs to the herpesviridae ICP4 family.</text>
</comment>
<feature type="chain" id="PRO_0000115821" description="Major viral transcription factor ICP4 homolog">
    <location>
        <begin position="1"/>
        <end position="1461"/>
    </location>
</feature>
<feature type="region of interest" description="Disordered" evidence="1">
    <location>
        <begin position="25"/>
        <end position="60"/>
    </location>
</feature>
<feature type="region of interest" description="Disordered" evidence="1">
    <location>
        <begin position="75"/>
        <end position="518"/>
    </location>
</feature>
<feature type="region of interest" description="Disordered" evidence="1">
    <location>
        <begin position="811"/>
        <end position="1002"/>
    </location>
</feature>
<feature type="region of interest" description="Disordered" evidence="1">
    <location>
        <begin position="1395"/>
        <end position="1461"/>
    </location>
</feature>
<feature type="compositionally biased region" description="Low complexity" evidence="1">
    <location>
        <begin position="75"/>
        <end position="90"/>
    </location>
</feature>
<feature type="compositionally biased region" description="Acidic residues" evidence="1">
    <location>
        <begin position="102"/>
        <end position="113"/>
    </location>
</feature>
<feature type="compositionally biased region" description="Low complexity" evidence="1">
    <location>
        <begin position="167"/>
        <end position="197"/>
    </location>
</feature>
<feature type="compositionally biased region" description="Low complexity" evidence="1">
    <location>
        <begin position="224"/>
        <end position="249"/>
    </location>
</feature>
<feature type="compositionally biased region" description="Gly residues" evidence="1">
    <location>
        <begin position="250"/>
        <end position="260"/>
    </location>
</feature>
<feature type="compositionally biased region" description="Basic and acidic residues" evidence="1">
    <location>
        <begin position="270"/>
        <end position="285"/>
    </location>
</feature>
<feature type="compositionally biased region" description="Low complexity" evidence="1">
    <location>
        <begin position="292"/>
        <end position="308"/>
    </location>
</feature>
<feature type="compositionally biased region" description="Low complexity" evidence="1">
    <location>
        <begin position="353"/>
        <end position="405"/>
    </location>
</feature>
<feature type="compositionally biased region" description="Pro residues" evidence="1">
    <location>
        <begin position="423"/>
        <end position="434"/>
    </location>
</feature>
<feature type="compositionally biased region" description="Low complexity" evidence="1">
    <location>
        <begin position="435"/>
        <end position="453"/>
    </location>
</feature>
<feature type="compositionally biased region" description="Pro residues" evidence="1">
    <location>
        <begin position="814"/>
        <end position="826"/>
    </location>
</feature>
<feature type="compositionally biased region" description="Low complexity" evidence="1">
    <location>
        <begin position="838"/>
        <end position="888"/>
    </location>
</feature>
<feature type="compositionally biased region" description="Basic residues" evidence="1">
    <location>
        <begin position="894"/>
        <end position="903"/>
    </location>
</feature>
<feature type="compositionally biased region" description="Low complexity" evidence="1">
    <location>
        <begin position="944"/>
        <end position="965"/>
    </location>
</feature>
<name>ICP4_SUHVF</name>
<reference key="1">
    <citation type="journal article" date="1989" name="Nucleic Acids Res.">
        <title>DNA nucleotide sequence analysis of the immediate-early gene of pseudorabies virus.</title>
        <authorList>
            <person name="Cheung A.K."/>
        </authorList>
    </citation>
    <scope>NUCLEOTIDE SEQUENCE [GENOMIC DNA]</scope>
</reference>
<reference key="2">
    <citation type="submission" date="1989-11" db="EMBL/GenBank/DDBJ databases">
        <authorList>
            <person name="Cheung A.K."/>
        </authorList>
    </citation>
    <scope>SEQUENCE REVISION</scope>
</reference>
<gene>
    <name type="primary">IE</name>
</gene>